<feature type="chain" id="PRO_0000371498" description="Uncharacterized protein SMPP17">
    <location>
        <begin position="1" status="less than"/>
        <end position="11" status="greater than"/>
    </location>
</feature>
<feature type="unsure residue" description="L or I" evidence="1">
    <location>
        <position position="1"/>
    </location>
</feature>
<feature type="unsure residue" description="L or I" evidence="1">
    <location>
        <position position="3"/>
    </location>
</feature>
<feature type="unsure residue" description="L or I" evidence="1">
    <location>
        <position position="7"/>
    </location>
</feature>
<feature type="unsure residue" description="L or I" evidence="1">
    <location>
        <position position="9"/>
    </location>
</feature>
<feature type="non-terminal residue" evidence="2">
    <location>
        <position position="1"/>
    </location>
</feature>
<feature type="non-terminal residue" evidence="2">
    <location>
        <position position="11"/>
    </location>
</feature>
<organism>
    <name type="scientific">Nautilus macromphalus</name>
    <name type="common">Bellybutton nautilus</name>
    <dbReference type="NCBI Taxonomy" id="34576"/>
    <lineage>
        <taxon>Eukaryota</taxon>
        <taxon>Metazoa</taxon>
        <taxon>Spiralia</taxon>
        <taxon>Lophotrochozoa</taxon>
        <taxon>Mollusca</taxon>
        <taxon>Cephalopoda</taxon>
        <taxon>Nautiloidea</taxon>
        <taxon>Nautilida</taxon>
        <taxon>Nautilidae</taxon>
        <taxon>Nautilus</taxon>
    </lineage>
</organism>
<evidence type="ECO:0000269" key="1">
    <source>
    </source>
</evidence>
<evidence type="ECO:0000303" key="2">
    <source>
    </source>
</evidence>
<comment type="tissue specificity">
    <text evidence="1">Nacreous layer of shell.</text>
</comment>
<sequence>LSLQEFLGLWR</sequence>
<name>SMP17_NAUMA</name>
<reference key="1">
    <citation type="journal article" date="2009" name="ChemBioChem">
        <title>Evolution of nacre: biochemistry and 'shellomics' of the shell organic matrix of the cephalopod Nautilus macromphalus.</title>
        <authorList>
            <person name="Marie B."/>
            <person name="Marin F."/>
            <person name="Marie A."/>
            <person name="Bedouet L."/>
            <person name="Dubost L."/>
            <person name="Alcaraz G."/>
            <person name="Milet C."/>
            <person name="Luquet G."/>
        </authorList>
    </citation>
    <scope>PROTEIN SEQUENCE</scope>
    <scope>TISSUE SPECIFICITY</scope>
    <source>
        <tissue>Shell</tissue>
    </source>
</reference>
<accession>P85382</accession>
<proteinExistence type="evidence at protein level"/>
<protein>
    <recommendedName>
        <fullName evidence="2">Uncharacterized protein SMPP17</fullName>
    </recommendedName>
</protein>
<keyword id="KW-0903">Direct protein sequencing</keyword>